<feature type="chain" id="PRO_0000436423" description="DUF724 domain-containing protein 5">
    <location>
        <begin position="1"/>
        <end position="243"/>
    </location>
</feature>
<feature type="domain" description="DUF724" evidence="1">
    <location>
        <begin position="59"/>
        <end position="243"/>
    </location>
</feature>
<feature type="region of interest" description="Disordered" evidence="2">
    <location>
        <begin position="1"/>
        <end position="51"/>
    </location>
</feature>
<feature type="coiled-coil region" evidence="1">
    <location>
        <begin position="174"/>
        <end position="223"/>
    </location>
</feature>
<feature type="compositionally biased region" description="Basic and acidic residues" evidence="2">
    <location>
        <begin position="1"/>
        <end position="24"/>
    </location>
</feature>
<gene>
    <name evidence="4" type="primary">DUF5</name>
    <name evidence="7" type="ordered locus">At2g47220</name>
</gene>
<name>DUF5_ARATH</name>
<organism>
    <name type="scientific">Arabidopsis thaliana</name>
    <name type="common">Mouse-ear cress</name>
    <dbReference type="NCBI Taxonomy" id="3702"/>
    <lineage>
        <taxon>Eukaryota</taxon>
        <taxon>Viridiplantae</taxon>
        <taxon>Streptophyta</taxon>
        <taxon>Embryophyta</taxon>
        <taxon>Tracheophyta</taxon>
        <taxon>Spermatophyta</taxon>
        <taxon>Magnoliopsida</taxon>
        <taxon>eudicotyledons</taxon>
        <taxon>Gunneridae</taxon>
        <taxon>Pentapetalae</taxon>
        <taxon>rosids</taxon>
        <taxon>malvids</taxon>
        <taxon>Brassicales</taxon>
        <taxon>Brassicaceae</taxon>
        <taxon>Camelineae</taxon>
        <taxon>Arabidopsis</taxon>
    </lineage>
</organism>
<keyword id="KW-0175">Coiled coil</keyword>
<keyword id="KW-0341">Growth regulation</keyword>
<keyword id="KW-0539">Nucleus</keyword>
<keyword id="KW-1185">Reference proteome</keyword>
<keyword id="KW-0813">Transport</keyword>
<comment type="function">
    <text evidence="6">May be involved in the polar growth of plant cells via transportation of RNAs.</text>
</comment>
<comment type="subunit">
    <text evidence="3">Homodimer.</text>
</comment>
<comment type="subcellular location">
    <subcellularLocation>
        <location evidence="3">Nucleus</location>
    </subcellularLocation>
</comment>
<comment type="tissue specificity">
    <text evidence="3">Expressed in leaves, flowers and siliques.</text>
</comment>
<comment type="disruption phenotype">
    <text evidence="3">No visible phenotype under normal growth conditions.</text>
</comment>
<comment type="sequence caution" evidence="5">
    <conflict type="erroneous gene model prediction">
        <sequence resource="EMBL-CDS" id="AAB63822"/>
    </conflict>
</comment>
<comment type="sequence caution" evidence="5">
    <conflict type="erroneous gene model prediction">
        <sequence resource="EMBL-CDS" id="AEC10815"/>
    </conflict>
</comment>
<dbReference type="EMBL" id="AC002337">
    <property type="protein sequence ID" value="AAB63822.1"/>
    <property type="status" value="ALT_SEQ"/>
    <property type="molecule type" value="Genomic_DNA"/>
</dbReference>
<dbReference type="EMBL" id="CP002685">
    <property type="protein sequence ID" value="AEC10815.1"/>
    <property type="status" value="ALT_SEQ"/>
    <property type="molecule type" value="Genomic_DNA"/>
</dbReference>
<dbReference type="EMBL" id="AK229535">
    <property type="protein sequence ID" value="BAF01389.1"/>
    <property type="molecule type" value="mRNA"/>
</dbReference>
<dbReference type="PIR" id="E84912">
    <property type="entry name" value="E84912"/>
</dbReference>
<dbReference type="RefSeq" id="NP_182244.2">
    <property type="nucleotide sequence ID" value="NM_130290.2"/>
</dbReference>
<dbReference type="SMR" id="Q0WNB1"/>
<dbReference type="PaxDb" id="3702-AT2G47220.1"/>
<dbReference type="GeneID" id="819335"/>
<dbReference type="KEGG" id="ath:AT2G47220"/>
<dbReference type="Araport" id="AT2G47220"/>
<dbReference type="TAIR" id="AT2G47220"/>
<dbReference type="eggNOG" id="KOG0725">
    <property type="taxonomic scope" value="Eukaryota"/>
</dbReference>
<dbReference type="eggNOG" id="KOG1067">
    <property type="taxonomic scope" value="Eukaryota"/>
</dbReference>
<dbReference type="InParanoid" id="Q0WNB1"/>
<dbReference type="PhylomeDB" id="Q0WNB1"/>
<dbReference type="PRO" id="PR:Q0WNB1"/>
<dbReference type="Proteomes" id="UP000006548">
    <property type="component" value="Chromosome 2"/>
</dbReference>
<dbReference type="ExpressionAtlas" id="Q0WNB1">
    <property type="expression patterns" value="baseline and differential"/>
</dbReference>
<dbReference type="GO" id="GO:0009570">
    <property type="term" value="C:chloroplast stroma"/>
    <property type="evidence" value="ECO:0007005"/>
    <property type="project" value="TAIR"/>
</dbReference>
<dbReference type="GO" id="GO:0005634">
    <property type="term" value="C:nucleus"/>
    <property type="evidence" value="ECO:0000314"/>
    <property type="project" value="UniProtKB"/>
</dbReference>
<dbReference type="GO" id="GO:0042803">
    <property type="term" value="F:protein homodimerization activity"/>
    <property type="evidence" value="ECO:0000353"/>
    <property type="project" value="UniProtKB"/>
</dbReference>
<dbReference type="InterPro" id="IPR007930">
    <property type="entry name" value="DUF724"/>
</dbReference>
<dbReference type="Pfam" id="PF05266">
    <property type="entry name" value="DUF724"/>
    <property type="match status" value="1"/>
</dbReference>
<accession>Q0WNB1</accession>
<accession>F4IL21</accession>
<accession>O22896</accession>
<reference key="1">
    <citation type="journal article" date="1999" name="Nature">
        <title>Sequence and analysis of chromosome 2 of the plant Arabidopsis thaliana.</title>
        <authorList>
            <person name="Lin X."/>
            <person name="Kaul S."/>
            <person name="Rounsley S.D."/>
            <person name="Shea T.P."/>
            <person name="Benito M.-I."/>
            <person name="Town C.D."/>
            <person name="Fujii C.Y."/>
            <person name="Mason T.M."/>
            <person name="Bowman C.L."/>
            <person name="Barnstead M.E."/>
            <person name="Feldblyum T.V."/>
            <person name="Buell C.R."/>
            <person name="Ketchum K.A."/>
            <person name="Lee J.J."/>
            <person name="Ronning C.M."/>
            <person name="Koo H.L."/>
            <person name="Moffat K.S."/>
            <person name="Cronin L.A."/>
            <person name="Shen M."/>
            <person name="Pai G."/>
            <person name="Van Aken S."/>
            <person name="Umayam L."/>
            <person name="Tallon L.J."/>
            <person name="Gill J.E."/>
            <person name="Adams M.D."/>
            <person name="Carrera A.J."/>
            <person name="Creasy T.H."/>
            <person name="Goodman H.M."/>
            <person name="Somerville C.R."/>
            <person name="Copenhaver G.P."/>
            <person name="Preuss D."/>
            <person name="Nierman W.C."/>
            <person name="White O."/>
            <person name="Eisen J.A."/>
            <person name="Salzberg S.L."/>
            <person name="Fraser C.M."/>
            <person name="Venter J.C."/>
        </authorList>
    </citation>
    <scope>NUCLEOTIDE SEQUENCE [LARGE SCALE GENOMIC DNA]</scope>
    <source>
        <strain>cv. Columbia</strain>
    </source>
</reference>
<reference key="2">
    <citation type="journal article" date="2017" name="Plant J.">
        <title>Araport11: a complete reannotation of the Arabidopsis thaliana reference genome.</title>
        <authorList>
            <person name="Cheng C.Y."/>
            <person name="Krishnakumar V."/>
            <person name="Chan A.P."/>
            <person name="Thibaud-Nissen F."/>
            <person name="Schobel S."/>
            <person name="Town C.D."/>
        </authorList>
    </citation>
    <scope>GENOME REANNOTATION</scope>
    <source>
        <strain>cv. Columbia</strain>
    </source>
</reference>
<reference key="3">
    <citation type="submission" date="2006-07" db="EMBL/GenBank/DDBJ databases">
        <title>Large-scale analysis of RIKEN Arabidopsis full-length (RAFL) cDNAs.</title>
        <authorList>
            <person name="Totoki Y."/>
            <person name="Seki M."/>
            <person name="Ishida J."/>
            <person name="Nakajima M."/>
            <person name="Enju A."/>
            <person name="Kamiya A."/>
            <person name="Narusaka M."/>
            <person name="Shin-i T."/>
            <person name="Nakagawa M."/>
            <person name="Sakamoto N."/>
            <person name="Oishi K."/>
            <person name="Kohara Y."/>
            <person name="Kobayashi M."/>
            <person name="Toyoda A."/>
            <person name="Sakaki Y."/>
            <person name="Sakurai T."/>
            <person name="Iida K."/>
            <person name="Akiyama K."/>
            <person name="Satou M."/>
            <person name="Toyoda T."/>
            <person name="Konagaya A."/>
            <person name="Carninci P."/>
            <person name="Kawai J."/>
            <person name="Hayashizaki Y."/>
            <person name="Shinozaki K."/>
        </authorList>
    </citation>
    <scope>NUCLEOTIDE SEQUENCE [LARGE SCALE MRNA]</scope>
    <source>
        <strain>cv. Columbia</strain>
    </source>
</reference>
<reference key="4">
    <citation type="journal article" date="2010" name="Plant Mol. Biol.">
        <title>Characterization of DUF724 gene family in Arabidopsis thaliana.</title>
        <authorList>
            <person name="Cao X."/>
            <person name="Yang K.Z."/>
            <person name="Xia C."/>
            <person name="Zhang X.Q."/>
            <person name="Chen L.Q."/>
            <person name="Ye D."/>
        </authorList>
    </citation>
    <scope>FUNCTION</scope>
    <scope>GENE FAMILY</scope>
    <scope>NOMENCLATURE</scope>
    <scope>SUBUNIT</scope>
    <scope>SUBCELLULAR LOCATION</scope>
    <scope>TISSUE SPECIFICITY</scope>
    <scope>DISRUPTION PHENOTYPE</scope>
</reference>
<evidence type="ECO:0000255" key="1"/>
<evidence type="ECO:0000256" key="2">
    <source>
        <dbReference type="SAM" id="MobiDB-lite"/>
    </source>
</evidence>
<evidence type="ECO:0000269" key="3">
    <source>
    </source>
</evidence>
<evidence type="ECO:0000303" key="4">
    <source>
    </source>
</evidence>
<evidence type="ECO:0000305" key="5"/>
<evidence type="ECO:0000305" key="6">
    <source>
    </source>
</evidence>
<evidence type="ECO:0000312" key="7">
    <source>
        <dbReference type="Araport" id="AT2G47220"/>
    </source>
</evidence>
<proteinExistence type="evidence at protein level"/>
<protein>
    <recommendedName>
        <fullName evidence="5">DUF724 domain-containing protein 5</fullName>
        <shortName evidence="4">AtDUF5</shortName>
    </recommendedName>
</protein>
<sequence length="243" mass="28252">MREKHYSEDNSRKRKRGELEHNSDLNETVLPSDWTPDPVKNFAADDDDEETKAKDATMVLPFVKKSPVWKIYESMEVFKRVPQSPHFSPLFEAKEDFREGFALGMMVTFSGVLEKVEDLKTDVPIRQLNSLKDSFTELEKHGFTVTAPLSRIAKLLALKDRQLKILEELKVFDKEMKDESSKKHKAEQEFGEMERKILEVKNKVLELQKQEAALEKQKDATYEKICKMESRARDLGVELEDVE</sequence>